<sequence length="539" mass="56700">MAKELKFSEDARAKMKAGVDKLADTVKTTIGPKGRNVVLEQSYGAPTITNDGVTIAKAIELEDHFENMGAKLVAEVASKTNDIAGDGTTTATVLTQAIVGEGLKNVTAGANPVGIRTGIEKATAAAVAKLHEMSHTVNTKDEIAQIASISAANEEVGELIAEAMDKVGNDGVITIEESKGIETTLDVVEGMQFDRGYMSQYMVTDNDKMEANLDNPYILITDKKIGNIQDILPVLQSVVEQGRALLIIADDITGEALPTLVLNKMRGTFNVVAVKAPGFGDRRKAQLEDIAILTGGTVITEDLGLNLKDVTIDQLGQASKINITKDNTTIVEGSGDKGAVASRVDTIKQQIAETTSDFDREKLQERLAKLAGGVAVINVGAATETELKERKYRIEDALNATRAAVEEGFVAGGGTALVNVIAAVSALSEEGDVQTGINTVIKALESPVRQIAENAGLEGSVIVNKLKEQKEGFGYNAATDEWVDMIAAGIVDPTKVTRSALQNAASVSALLLTTEAVVAEEPKDDAPAAMPQGGMPGMM</sequence>
<evidence type="ECO:0000255" key="1">
    <source>
        <dbReference type="HAMAP-Rule" id="MF_00600"/>
    </source>
</evidence>
<organism>
    <name type="scientific">Leuconostoc mesenteroides subsp. mesenteroides (strain ATCC 8293 / DSM 20343 / BCRC 11652 / CCM 1803 / JCM 6124 / NCDO 523 / NBRC 100496 / NCIMB 8023 / NCTC 12954 / NRRL B-1118 / 37Y)</name>
    <dbReference type="NCBI Taxonomy" id="203120"/>
    <lineage>
        <taxon>Bacteria</taxon>
        <taxon>Bacillati</taxon>
        <taxon>Bacillota</taxon>
        <taxon>Bacilli</taxon>
        <taxon>Lactobacillales</taxon>
        <taxon>Lactobacillaceae</taxon>
        <taxon>Leuconostoc</taxon>
    </lineage>
</organism>
<feature type="chain" id="PRO_0000332011" description="Chaperonin GroEL">
    <location>
        <begin position="1"/>
        <end position="539"/>
    </location>
</feature>
<feature type="binding site" evidence="1">
    <location>
        <begin position="29"/>
        <end position="32"/>
    </location>
    <ligand>
        <name>ATP</name>
        <dbReference type="ChEBI" id="CHEBI:30616"/>
    </ligand>
</feature>
<feature type="binding site" evidence="1">
    <location>
        <begin position="86"/>
        <end position="90"/>
    </location>
    <ligand>
        <name>ATP</name>
        <dbReference type="ChEBI" id="CHEBI:30616"/>
    </ligand>
</feature>
<feature type="binding site" evidence="1">
    <location>
        <position position="413"/>
    </location>
    <ligand>
        <name>ATP</name>
        <dbReference type="ChEBI" id="CHEBI:30616"/>
    </ligand>
</feature>
<feature type="binding site" evidence="1">
    <location>
        <begin position="476"/>
        <end position="478"/>
    </location>
    <ligand>
        <name>ATP</name>
        <dbReference type="ChEBI" id="CHEBI:30616"/>
    </ligand>
</feature>
<feature type="binding site" evidence="1">
    <location>
        <position position="492"/>
    </location>
    <ligand>
        <name>ATP</name>
        <dbReference type="ChEBI" id="CHEBI:30616"/>
    </ligand>
</feature>
<accession>Q03VC3</accession>
<dbReference type="EC" id="5.6.1.7" evidence="1"/>
<dbReference type="EMBL" id="CP000414">
    <property type="protein sequence ID" value="ABJ62849.1"/>
    <property type="molecule type" value="Genomic_DNA"/>
</dbReference>
<dbReference type="RefSeq" id="WP_011680362.1">
    <property type="nucleotide sequence ID" value="NC_008531.1"/>
</dbReference>
<dbReference type="SMR" id="Q03VC3"/>
<dbReference type="EnsemblBacteria" id="ABJ62849">
    <property type="protein sequence ID" value="ABJ62849"/>
    <property type="gene ID" value="LEUM_1762"/>
</dbReference>
<dbReference type="GeneID" id="97505477"/>
<dbReference type="KEGG" id="lme:LEUM_1762"/>
<dbReference type="eggNOG" id="COG0459">
    <property type="taxonomic scope" value="Bacteria"/>
</dbReference>
<dbReference type="HOGENOM" id="CLU_016503_1_1_9"/>
<dbReference type="Proteomes" id="UP000000362">
    <property type="component" value="Chromosome"/>
</dbReference>
<dbReference type="GO" id="GO:0005737">
    <property type="term" value="C:cytoplasm"/>
    <property type="evidence" value="ECO:0007669"/>
    <property type="project" value="UniProtKB-SubCell"/>
</dbReference>
<dbReference type="GO" id="GO:0005524">
    <property type="term" value="F:ATP binding"/>
    <property type="evidence" value="ECO:0007669"/>
    <property type="project" value="UniProtKB-UniRule"/>
</dbReference>
<dbReference type="GO" id="GO:0140662">
    <property type="term" value="F:ATP-dependent protein folding chaperone"/>
    <property type="evidence" value="ECO:0007669"/>
    <property type="project" value="InterPro"/>
</dbReference>
<dbReference type="GO" id="GO:0016853">
    <property type="term" value="F:isomerase activity"/>
    <property type="evidence" value="ECO:0007669"/>
    <property type="project" value="UniProtKB-KW"/>
</dbReference>
<dbReference type="GO" id="GO:0051082">
    <property type="term" value="F:unfolded protein binding"/>
    <property type="evidence" value="ECO:0007669"/>
    <property type="project" value="UniProtKB-UniRule"/>
</dbReference>
<dbReference type="GO" id="GO:0042026">
    <property type="term" value="P:protein refolding"/>
    <property type="evidence" value="ECO:0007669"/>
    <property type="project" value="UniProtKB-UniRule"/>
</dbReference>
<dbReference type="CDD" id="cd03344">
    <property type="entry name" value="GroEL"/>
    <property type="match status" value="1"/>
</dbReference>
<dbReference type="FunFam" id="3.50.7.10:FF:000001">
    <property type="entry name" value="60 kDa chaperonin"/>
    <property type="match status" value="1"/>
</dbReference>
<dbReference type="Gene3D" id="3.50.7.10">
    <property type="entry name" value="GroEL"/>
    <property type="match status" value="1"/>
</dbReference>
<dbReference type="Gene3D" id="1.10.560.10">
    <property type="entry name" value="GroEL-like equatorial domain"/>
    <property type="match status" value="1"/>
</dbReference>
<dbReference type="Gene3D" id="3.30.260.10">
    <property type="entry name" value="TCP-1-like chaperonin intermediate domain"/>
    <property type="match status" value="1"/>
</dbReference>
<dbReference type="HAMAP" id="MF_00600">
    <property type="entry name" value="CH60"/>
    <property type="match status" value="1"/>
</dbReference>
<dbReference type="InterPro" id="IPR018370">
    <property type="entry name" value="Chaperonin_Cpn60_CS"/>
</dbReference>
<dbReference type="InterPro" id="IPR001844">
    <property type="entry name" value="Cpn60/GroEL"/>
</dbReference>
<dbReference type="InterPro" id="IPR002423">
    <property type="entry name" value="Cpn60/GroEL/TCP-1"/>
</dbReference>
<dbReference type="InterPro" id="IPR027409">
    <property type="entry name" value="GroEL-like_apical_dom_sf"/>
</dbReference>
<dbReference type="InterPro" id="IPR027413">
    <property type="entry name" value="GROEL-like_equatorial_sf"/>
</dbReference>
<dbReference type="InterPro" id="IPR027410">
    <property type="entry name" value="TCP-1-like_intermed_sf"/>
</dbReference>
<dbReference type="NCBIfam" id="TIGR02348">
    <property type="entry name" value="GroEL"/>
    <property type="match status" value="1"/>
</dbReference>
<dbReference type="NCBIfam" id="NF000592">
    <property type="entry name" value="PRK00013.1"/>
    <property type="match status" value="1"/>
</dbReference>
<dbReference type="NCBIfam" id="NF009487">
    <property type="entry name" value="PRK12849.1"/>
    <property type="match status" value="1"/>
</dbReference>
<dbReference type="NCBIfam" id="NF009488">
    <property type="entry name" value="PRK12850.1"/>
    <property type="match status" value="1"/>
</dbReference>
<dbReference type="NCBIfam" id="NF009489">
    <property type="entry name" value="PRK12851.1"/>
    <property type="match status" value="1"/>
</dbReference>
<dbReference type="PANTHER" id="PTHR45633">
    <property type="entry name" value="60 KDA HEAT SHOCK PROTEIN, MITOCHONDRIAL"/>
    <property type="match status" value="1"/>
</dbReference>
<dbReference type="Pfam" id="PF00118">
    <property type="entry name" value="Cpn60_TCP1"/>
    <property type="match status" value="1"/>
</dbReference>
<dbReference type="PRINTS" id="PR00298">
    <property type="entry name" value="CHAPERONIN60"/>
</dbReference>
<dbReference type="SUPFAM" id="SSF52029">
    <property type="entry name" value="GroEL apical domain-like"/>
    <property type="match status" value="1"/>
</dbReference>
<dbReference type="SUPFAM" id="SSF48592">
    <property type="entry name" value="GroEL equatorial domain-like"/>
    <property type="match status" value="1"/>
</dbReference>
<dbReference type="SUPFAM" id="SSF54849">
    <property type="entry name" value="GroEL-intermediate domain like"/>
    <property type="match status" value="1"/>
</dbReference>
<dbReference type="PROSITE" id="PS00296">
    <property type="entry name" value="CHAPERONINS_CPN60"/>
    <property type="match status" value="1"/>
</dbReference>
<proteinExistence type="inferred from homology"/>
<comment type="function">
    <text evidence="1">Together with its co-chaperonin GroES, plays an essential role in assisting protein folding. The GroEL-GroES system forms a nano-cage that allows encapsulation of the non-native substrate proteins and provides a physical environment optimized to promote and accelerate protein folding.</text>
</comment>
<comment type="catalytic activity">
    <reaction evidence="1">
        <text>ATP + H2O + a folded polypeptide = ADP + phosphate + an unfolded polypeptide.</text>
        <dbReference type="EC" id="5.6.1.7"/>
    </reaction>
</comment>
<comment type="subunit">
    <text evidence="1">Forms a cylinder of 14 subunits composed of two heptameric rings stacked back-to-back. Interacts with the co-chaperonin GroES.</text>
</comment>
<comment type="subcellular location">
    <subcellularLocation>
        <location evidence="1">Cytoplasm</location>
    </subcellularLocation>
</comment>
<comment type="similarity">
    <text evidence="1">Belongs to the chaperonin (HSP60) family.</text>
</comment>
<reference key="1">
    <citation type="journal article" date="2006" name="Proc. Natl. Acad. Sci. U.S.A.">
        <title>Comparative genomics of the lactic acid bacteria.</title>
        <authorList>
            <person name="Makarova K.S."/>
            <person name="Slesarev A."/>
            <person name="Wolf Y.I."/>
            <person name="Sorokin A."/>
            <person name="Mirkin B."/>
            <person name="Koonin E.V."/>
            <person name="Pavlov A."/>
            <person name="Pavlova N."/>
            <person name="Karamychev V."/>
            <person name="Polouchine N."/>
            <person name="Shakhova V."/>
            <person name="Grigoriev I."/>
            <person name="Lou Y."/>
            <person name="Rohksar D."/>
            <person name="Lucas S."/>
            <person name="Huang K."/>
            <person name="Goodstein D.M."/>
            <person name="Hawkins T."/>
            <person name="Plengvidhya V."/>
            <person name="Welker D."/>
            <person name="Hughes J."/>
            <person name="Goh Y."/>
            <person name="Benson A."/>
            <person name="Baldwin K."/>
            <person name="Lee J.-H."/>
            <person name="Diaz-Muniz I."/>
            <person name="Dosti B."/>
            <person name="Smeianov V."/>
            <person name="Wechter W."/>
            <person name="Barabote R."/>
            <person name="Lorca G."/>
            <person name="Altermann E."/>
            <person name="Barrangou R."/>
            <person name="Ganesan B."/>
            <person name="Xie Y."/>
            <person name="Rawsthorne H."/>
            <person name="Tamir D."/>
            <person name="Parker C."/>
            <person name="Breidt F."/>
            <person name="Broadbent J.R."/>
            <person name="Hutkins R."/>
            <person name="O'Sullivan D."/>
            <person name="Steele J."/>
            <person name="Unlu G."/>
            <person name="Saier M.H. Jr."/>
            <person name="Klaenhammer T."/>
            <person name="Richardson P."/>
            <person name="Kozyavkin S."/>
            <person name="Weimer B.C."/>
            <person name="Mills D.A."/>
        </authorList>
    </citation>
    <scope>NUCLEOTIDE SEQUENCE [LARGE SCALE GENOMIC DNA]</scope>
    <source>
        <strain>ATCC 8293 / DSM 20343 / BCRC 11652 / CCM 1803 / JCM 6124 / NCDO 523 / NBRC 100496 / NCIMB 8023 / NCTC 12954 / NRRL B-1118 / 37Y</strain>
    </source>
</reference>
<gene>
    <name evidence="1" type="primary">groEL</name>
    <name evidence="1" type="synonym">groL</name>
    <name type="ordered locus">LEUM_1762</name>
</gene>
<keyword id="KW-0067">ATP-binding</keyword>
<keyword id="KW-0143">Chaperone</keyword>
<keyword id="KW-0963">Cytoplasm</keyword>
<keyword id="KW-0413">Isomerase</keyword>
<keyword id="KW-0547">Nucleotide-binding</keyword>
<keyword id="KW-1185">Reference proteome</keyword>
<protein>
    <recommendedName>
        <fullName evidence="1">Chaperonin GroEL</fullName>
        <ecNumber evidence="1">5.6.1.7</ecNumber>
    </recommendedName>
    <alternativeName>
        <fullName evidence="1">60 kDa chaperonin</fullName>
    </alternativeName>
    <alternativeName>
        <fullName evidence="1">Chaperonin-60</fullName>
        <shortName evidence="1">Cpn60</shortName>
    </alternativeName>
</protein>
<name>CH60_LEUMM</name>